<protein>
    <recommendedName>
        <fullName>NADH-ubiquinone oxidoreductase chain 3</fullName>
        <ecNumber>7.1.1.2</ecNumber>
    </recommendedName>
    <alternativeName>
        <fullName>NADH dehydrogenase subunit 3</fullName>
    </alternativeName>
</protein>
<name>NU3M_YARLI</name>
<accession>Q9B6C7</accession>
<keyword id="KW-0002">3D-structure</keyword>
<keyword id="KW-0249">Electron transport</keyword>
<keyword id="KW-0472">Membrane</keyword>
<keyword id="KW-0496">Mitochondrion</keyword>
<keyword id="KW-0520">NAD</keyword>
<keyword id="KW-1185">Reference proteome</keyword>
<keyword id="KW-0679">Respiratory chain</keyword>
<keyword id="KW-1278">Translocase</keyword>
<keyword id="KW-0812">Transmembrane</keyword>
<keyword id="KW-1133">Transmembrane helix</keyword>
<keyword id="KW-0813">Transport</keyword>
<keyword id="KW-0830">Ubiquinone</keyword>
<reference key="1">
    <citation type="journal article" date="2001" name="Comp. Funct. Genomics">
        <title>The complete mitochondrial genome of Yarrowia lipolytica.</title>
        <authorList>
            <person name="Kerscher S."/>
            <person name="Durstewitz G."/>
            <person name="Casaregola S."/>
            <person name="Gaillardin C."/>
            <person name="Brandt U."/>
        </authorList>
    </citation>
    <scope>NUCLEOTIDE SEQUENCE [LARGE SCALE GENOMIC DNA]</scope>
    <source>
        <strain>ATCC 20460 / W29 / CBS 7504 / IFP29</strain>
    </source>
</reference>
<reference key="2">
    <citation type="journal article" date="2004" name="Biochim. Biophys. Acta">
        <title>Subunit composition of mitochondrial complex I from the yeast Yarrowia lipolytica.</title>
        <authorList>
            <person name="Abdrakhmanova A."/>
            <person name="Zickermann V."/>
            <person name="Bostina M."/>
            <person name="Radermacher M."/>
            <person name="Schagger H."/>
            <person name="Kerscher S."/>
            <person name="Brandt U."/>
        </authorList>
    </citation>
    <scope>SUBUNIT</scope>
</reference>
<organism>
    <name type="scientific">Yarrowia lipolytica (strain CLIB 122 / E 150)</name>
    <name type="common">Yeast</name>
    <name type="synonym">Candida lipolytica</name>
    <dbReference type="NCBI Taxonomy" id="284591"/>
    <lineage>
        <taxon>Eukaryota</taxon>
        <taxon>Fungi</taxon>
        <taxon>Dikarya</taxon>
        <taxon>Ascomycota</taxon>
        <taxon>Saccharomycotina</taxon>
        <taxon>Dipodascomycetes</taxon>
        <taxon>Dipodascales</taxon>
        <taxon>Dipodascales incertae sedis</taxon>
        <taxon>Yarrowia</taxon>
    </lineage>
</organism>
<geneLocation type="mitochondrion"/>
<evidence type="ECO:0000250" key="1"/>
<evidence type="ECO:0000255" key="2"/>
<evidence type="ECO:0000269" key="3">
    <source>
    </source>
</evidence>
<evidence type="ECO:0000305" key="4"/>
<evidence type="ECO:0007829" key="5">
    <source>
        <dbReference type="PDB" id="7O71"/>
    </source>
</evidence>
<evidence type="ECO:0007829" key="6">
    <source>
        <dbReference type="PDB" id="7ZKP"/>
    </source>
</evidence>
<proteinExistence type="evidence at protein level"/>
<feature type="chain" id="PRO_0000117841" description="NADH-ubiquinone oxidoreductase chain 3">
    <location>
        <begin position="1"/>
        <end position="128"/>
    </location>
</feature>
<feature type="transmembrane region" description="Helical" evidence="2">
    <location>
        <begin position="4"/>
        <end position="24"/>
    </location>
</feature>
<feature type="transmembrane region" description="Helical" evidence="2">
    <location>
        <begin position="50"/>
        <end position="70"/>
    </location>
</feature>
<feature type="transmembrane region" description="Helical" evidence="2">
    <location>
        <begin position="86"/>
        <end position="106"/>
    </location>
</feature>
<feature type="helix" evidence="5">
    <location>
        <begin position="3"/>
        <end position="25"/>
    </location>
</feature>
<feature type="turn" evidence="5">
    <location>
        <begin position="32"/>
        <end position="35"/>
    </location>
</feature>
<feature type="turn" evidence="6">
    <location>
        <begin position="38"/>
        <end position="41"/>
    </location>
</feature>
<feature type="helix" evidence="5">
    <location>
        <begin position="54"/>
        <end position="72"/>
    </location>
</feature>
<feature type="helix" evidence="5">
    <location>
        <begin position="74"/>
        <end position="77"/>
    </location>
</feature>
<feature type="turn" evidence="5">
    <location>
        <begin position="78"/>
        <end position="83"/>
    </location>
</feature>
<feature type="helix" evidence="5">
    <location>
        <begin position="84"/>
        <end position="107"/>
    </location>
</feature>
<feature type="turn" evidence="5">
    <location>
        <begin position="108"/>
        <end position="111"/>
    </location>
</feature>
<feature type="strand" evidence="5">
    <location>
        <begin position="124"/>
        <end position="126"/>
    </location>
</feature>
<comment type="function">
    <text>Core subunit of the mitochondrial membrane respiratory chain NADH dehydrogenase (Complex I) that is believed to belong to the minimal assembly required for catalysis. Complex I functions in the transfer of electrons from NADH to the respiratory chain. The immediate electron acceptor for the enzyme is believed to be ubiquinone.</text>
</comment>
<comment type="catalytic activity">
    <reaction>
        <text>a ubiquinone + NADH + 5 H(+)(in) = a ubiquinol + NAD(+) + 4 H(+)(out)</text>
        <dbReference type="Rhea" id="RHEA:29091"/>
        <dbReference type="Rhea" id="RHEA-COMP:9565"/>
        <dbReference type="Rhea" id="RHEA-COMP:9566"/>
        <dbReference type="ChEBI" id="CHEBI:15378"/>
        <dbReference type="ChEBI" id="CHEBI:16389"/>
        <dbReference type="ChEBI" id="CHEBI:17976"/>
        <dbReference type="ChEBI" id="CHEBI:57540"/>
        <dbReference type="ChEBI" id="CHEBI:57945"/>
        <dbReference type="EC" id="7.1.1.2"/>
    </reaction>
</comment>
<comment type="subunit">
    <text evidence="3">Complex I is composed of 37 different subunits.</text>
</comment>
<comment type="subcellular location">
    <subcellularLocation>
        <location evidence="1">Mitochondrion membrane</location>
        <topology evidence="1">Multi-pass membrane protein</topology>
    </subcellularLocation>
</comment>
<comment type="similarity">
    <text evidence="4">Belongs to the complex I subunit 3 family.</text>
</comment>
<gene>
    <name type="primary">ND3</name>
</gene>
<dbReference type="EC" id="7.1.1.2"/>
<dbReference type="EMBL" id="AJ307410">
    <property type="protein sequence ID" value="CAC28116.2"/>
    <property type="molecule type" value="Genomic_DNA"/>
</dbReference>
<dbReference type="RefSeq" id="NP_075446.2">
    <property type="nucleotide sequence ID" value="NC_002659.1"/>
</dbReference>
<dbReference type="PDB" id="6GCS">
    <property type="method" value="EM"/>
    <property type="resolution" value="4.32 A"/>
    <property type="chains" value="3=1-128"/>
</dbReference>
<dbReference type="PDB" id="6H8K">
    <property type="method" value="X-ray"/>
    <property type="resolution" value="3.79 A"/>
    <property type="chains" value="3=1-110"/>
</dbReference>
<dbReference type="PDB" id="6RFQ">
    <property type="method" value="EM"/>
    <property type="resolution" value="3.30 A"/>
    <property type="chains" value="3=1-128"/>
</dbReference>
<dbReference type="PDB" id="6RFR">
    <property type="method" value="EM"/>
    <property type="resolution" value="3.20 A"/>
    <property type="chains" value="3=1-128"/>
</dbReference>
<dbReference type="PDB" id="6RFS">
    <property type="method" value="EM"/>
    <property type="resolution" value="4.04 A"/>
    <property type="chains" value="3=1-128"/>
</dbReference>
<dbReference type="PDB" id="6Y79">
    <property type="method" value="EM"/>
    <property type="resolution" value="3.20 A"/>
    <property type="chains" value="3=1-128"/>
</dbReference>
<dbReference type="PDB" id="6YJ4">
    <property type="method" value="EM"/>
    <property type="resolution" value="2.70 A"/>
    <property type="chains" value="A=1-128"/>
</dbReference>
<dbReference type="PDB" id="7O6Y">
    <property type="method" value="EM"/>
    <property type="resolution" value="3.40 A"/>
    <property type="chains" value="3=1-128"/>
</dbReference>
<dbReference type="PDB" id="7O71">
    <property type="method" value="EM"/>
    <property type="resolution" value="2.40 A"/>
    <property type="chains" value="3=1-128"/>
</dbReference>
<dbReference type="PDB" id="7ZKP">
    <property type="method" value="EM"/>
    <property type="resolution" value="3.20 A"/>
    <property type="chains" value="3=1-128"/>
</dbReference>
<dbReference type="PDBsum" id="6GCS"/>
<dbReference type="PDBsum" id="6H8K"/>
<dbReference type="PDBsum" id="6RFQ"/>
<dbReference type="PDBsum" id="6RFR"/>
<dbReference type="PDBsum" id="6RFS"/>
<dbReference type="PDBsum" id="6Y79"/>
<dbReference type="PDBsum" id="6YJ4"/>
<dbReference type="PDBsum" id="7O6Y"/>
<dbReference type="PDBsum" id="7O71"/>
<dbReference type="PDBsum" id="7ZKP"/>
<dbReference type="EMDB" id="EMD-10815"/>
<dbReference type="EMDB" id="EMD-12741"/>
<dbReference type="EMDB" id="EMD-12742"/>
<dbReference type="EMDB" id="EMD-4384"/>
<dbReference type="SMR" id="Q9B6C7"/>
<dbReference type="DIP" id="DIP-61438N"/>
<dbReference type="IntAct" id="Q9B6C7">
    <property type="interactions" value="2"/>
</dbReference>
<dbReference type="STRING" id="284591.Q9B6C7"/>
<dbReference type="GeneID" id="802603"/>
<dbReference type="KEGG" id="yli:802603"/>
<dbReference type="InParanoid" id="Q9B6C7"/>
<dbReference type="Proteomes" id="UP000001300">
    <property type="component" value="Mitochondrion"/>
</dbReference>
<dbReference type="GO" id="GO:0031966">
    <property type="term" value="C:mitochondrial membrane"/>
    <property type="evidence" value="ECO:0007669"/>
    <property type="project" value="UniProtKB-SubCell"/>
</dbReference>
<dbReference type="GO" id="GO:0045271">
    <property type="term" value="C:respiratory chain complex I"/>
    <property type="evidence" value="ECO:0000318"/>
    <property type="project" value="GO_Central"/>
</dbReference>
<dbReference type="GO" id="GO:0008137">
    <property type="term" value="F:NADH dehydrogenase (ubiquinone) activity"/>
    <property type="evidence" value="ECO:0000318"/>
    <property type="project" value="GO_Central"/>
</dbReference>
<dbReference type="Gene3D" id="1.20.58.1610">
    <property type="entry name" value="NADH:ubiquinone/plastoquinone oxidoreductase, chain 3"/>
    <property type="match status" value="1"/>
</dbReference>
<dbReference type="InterPro" id="IPR000440">
    <property type="entry name" value="NADH_UbQ/plastoQ_OxRdtase_su3"/>
</dbReference>
<dbReference type="InterPro" id="IPR038430">
    <property type="entry name" value="NDAH_ubi_oxred_su3_sf"/>
</dbReference>
<dbReference type="PANTHER" id="PTHR11058">
    <property type="entry name" value="NADH-UBIQUINONE OXIDOREDUCTASE CHAIN 3"/>
    <property type="match status" value="1"/>
</dbReference>
<dbReference type="PANTHER" id="PTHR11058:SF9">
    <property type="entry name" value="NADH-UBIQUINONE OXIDOREDUCTASE CHAIN 3"/>
    <property type="match status" value="1"/>
</dbReference>
<dbReference type="Pfam" id="PF00507">
    <property type="entry name" value="Oxidored_q4"/>
    <property type="match status" value="1"/>
</dbReference>
<sequence length="128" mass="14470">MNTFIIFIILIPIVGFALLAVNILLAVYKPYNEKLGAFECGLTSFNQTRLAFNAAFILVAILFLPFDLEISTLLPYVMSIYLVSNYGFTIVLLFLLILIIGFVYEINTNALKINKHNKPNTDSLIYKL</sequence>